<organism>
    <name type="scientific">Anaeromyxobacter dehalogenans (strain 2CP-1 / ATCC BAA-258)</name>
    <dbReference type="NCBI Taxonomy" id="455488"/>
    <lineage>
        <taxon>Bacteria</taxon>
        <taxon>Pseudomonadati</taxon>
        <taxon>Myxococcota</taxon>
        <taxon>Myxococcia</taxon>
        <taxon>Myxococcales</taxon>
        <taxon>Cystobacterineae</taxon>
        <taxon>Anaeromyxobacteraceae</taxon>
        <taxon>Anaeromyxobacter</taxon>
    </lineage>
</organism>
<feature type="chain" id="PRO_0000376118" description="NADH-quinone oxidoreductase subunit B">
    <location>
        <begin position="1"/>
        <end position="182"/>
    </location>
</feature>
<feature type="binding site" evidence="1">
    <location>
        <position position="47"/>
    </location>
    <ligand>
        <name>[4Fe-4S] cluster</name>
        <dbReference type="ChEBI" id="CHEBI:49883"/>
    </ligand>
</feature>
<feature type="binding site" evidence="1">
    <location>
        <position position="48"/>
    </location>
    <ligand>
        <name>[4Fe-4S] cluster</name>
        <dbReference type="ChEBI" id="CHEBI:49883"/>
    </ligand>
</feature>
<feature type="binding site" evidence="1">
    <location>
        <position position="113"/>
    </location>
    <ligand>
        <name>[4Fe-4S] cluster</name>
        <dbReference type="ChEBI" id="CHEBI:49883"/>
    </ligand>
</feature>
<feature type="binding site" evidence="1">
    <location>
        <position position="142"/>
    </location>
    <ligand>
        <name>[4Fe-4S] cluster</name>
        <dbReference type="ChEBI" id="CHEBI:49883"/>
    </ligand>
</feature>
<comment type="function">
    <text evidence="1">NDH-1 shuttles electrons from NADH, via FMN and iron-sulfur (Fe-S) centers, to quinones in the respiratory chain. The immediate electron acceptor for the enzyme in this species is believed to be ubiquinone. Couples the redox reaction to proton translocation (for every two electrons transferred, four hydrogen ions are translocated across the cytoplasmic membrane), and thus conserves the redox energy in a proton gradient.</text>
</comment>
<comment type="catalytic activity">
    <reaction evidence="1">
        <text>a quinone + NADH + 5 H(+)(in) = a quinol + NAD(+) + 4 H(+)(out)</text>
        <dbReference type="Rhea" id="RHEA:57888"/>
        <dbReference type="ChEBI" id="CHEBI:15378"/>
        <dbReference type="ChEBI" id="CHEBI:24646"/>
        <dbReference type="ChEBI" id="CHEBI:57540"/>
        <dbReference type="ChEBI" id="CHEBI:57945"/>
        <dbReference type="ChEBI" id="CHEBI:132124"/>
    </reaction>
</comment>
<comment type="cofactor">
    <cofactor evidence="1">
        <name>[4Fe-4S] cluster</name>
        <dbReference type="ChEBI" id="CHEBI:49883"/>
    </cofactor>
    <text evidence="1">Binds 1 [4Fe-4S] cluster.</text>
</comment>
<comment type="subunit">
    <text evidence="1">NDH-1 is composed of 14 different subunits. Subunits NuoB, C, D, E, F, and G constitute the peripheral sector of the complex.</text>
</comment>
<comment type="subcellular location">
    <subcellularLocation>
        <location evidence="1">Cell inner membrane</location>
        <topology evidence="1">Peripheral membrane protein</topology>
        <orientation evidence="1">Cytoplasmic side</orientation>
    </subcellularLocation>
</comment>
<comment type="similarity">
    <text evidence="1">Belongs to the complex I 20 kDa subunit family.</text>
</comment>
<dbReference type="EC" id="7.1.1.-" evidence="1"/>
<dbReference type="EMBL" id="CP001359">
    <property type="protein sequence ID" value="ACL64724.1"/>
    <property type="molecule type" value="Genomic_DNA"/>
</dbReference>
<dbReference type="RefSeq" id="WP_012632689.1">
    <property type="nucleotide sequence ID" value="NC_011891.1"/>
</dbReference>
<dbReference type="SMR" id="B8JH22"/>
<dbReference type="KEGG" id="acp:A2cp1_1380"/>
<dbReference type="HOGENOM" id="CLU_055737_7_3_7"/>
<dbReference type="Proteomes" id="UP000007089">
    <property type="component" value="Chromosome"/>
</dbReference>
<dbReference type="GO" id="GO:0005886">
    <property type="term" value="C:plasma membrane"/>
    <property type="evidence" value="ECO:0007669"/>
    <property type="project" value="UniProtKB-SubCell"/>
</dbReference>
<dbReference type="GO" id="GO:0045271">
    <property type="term" value="C:respiratory chain complex I"/>
    <property type="evidence" value="ECO:0007669"/>
    <property type="project" value="TreeGrafter"/>
</dbReference>
<dbReference type="GO" id="GO:0051539">
    <property type="term" value="F:4 iron, 4 sulfur cluster binding"/>
    <property type="evidence" value="ECO:0007669"/>
    <property type="project" value="UniProtKB-KW"/>
</dbReference>
<dbReference type="GO" id="GO:0005506">
    <property type="term" value="F:iron ion binding"/>
    <property type="evidence" value="ECO:0007669"/>
    <property type="project" value="UniProtKB-UniRule"/>
</dbReference>
<dbReference type="GO" id="GO:0008137">
    <property type="term" value="F:NADH dehydrogenase (ubiquinone) activity"/>
    <property type="evidence" value="ECO:0007669"/>
    <property type="project" value="InterPro"/>
</dbReference>
<dbReference type="GO" id="GO:0050136">
    <property type="term" value="F:NADH:ubiquinone reductase (non-electrogenic) activity"/>
    <property type="evidence" value="ECO:0007669"/>
    <property type="project" value="UniProtKB-UniRule"/>
</dbReference>
<dbReference type="GO" id="GO:0048038">
    <property type="term" value="F:quinone binding"/>
    <property type="evidence" value="ECO:0007669"/>
    <property type="project" value="UniProtKB-KW"/>
</dbReference>
<dbReference type="GO" id="GO:0009060">
    <property type="term" value="P:aerobic respiration"/>
    <property type="evidence" value="ECO:0007669"/>
    <property type="project" value="TreeGrafter"/>
</dbReference>
<dbReference type="GO" id="GO:0015990">
    <property type="term" value="P:electron transport coupled proton transport"/>
    <property type="evidence" value="ECO:0007669"/>
    <property type="project" value="TreeGrafter"/>
</dbReference>
<dbReference type="FunFam" id="3.40.50.12280:FF:000002">
    <property type="entry name" value="NADH-quinone oxidoreductase subunit B"/>
    <property type="match status" value="1"/>
</dbReference>
<dbReference type="Gene3D" id="3.40.50.12280">
    <property type="match status" value="1"/>
</dbReference>
<dbReference type="HAMAP" id="MF_01356">
    <property type="entry name" value="NDH1_NuoB"/>
    <property type="match status" value="1"/>
</dbReference>
<dbReference type="InterPro" id="IPR006137">
    <property type="entry name" value="NADH_UbQ_OxRdtase-like_20kDa"/>
</dbReference>
<dbReference type="InterPro" id="IPR006138">
    <property type="entry name" value="NADH_UQ_OxRdtase_20Kd_su"/>
</dbReference>
<dbReference type="NCBIfam" id="TIGR01957">
    <property type="entry name" value="nuoB_fam"/>
    <property type="match status" value="1"/>
</dbReference>
<dbReference type="NCBIfam" id="NF005012">
    <property type="entry name" value="PRK06411.1"/>
    <property type="match status" value="1"/>
</dbReference>
<dbReference type="NCBIfam" id="NF011392">
    <property type="entry name" value="PRK14817.1"/>
    <property type="match status" value="1"/>
</dbReference>
<dbReference type="PANTHER" id="PTHR11995">
    <property type="entry name" value="NADH DEHYDROGENASE"/>
    <property type="match status" value="1"/>
</dbReference>
<dbReference type="PANTHER" id="PTHR11995:SF14">
    <property type="entry name" value="NADH DEHYDROGENASE [UBIQUINONE] IRON-SULFUR PROTEIN 7, MITOCHONDRIAL"/>
    <property type="match status" value="1"/>
</dbReference>
<dbReference type="Pfam" id="PF01058">
    <property type="entry name" value="Oxidored_q6"/>
    <property type="match status" value="1"/>
</dbReference>
<dbReference type="SUPFAM" id="SSF56770">
    <property type="entry name" value="HydA/Nqo6-like"/>
    <property type="match status" value="1"/>
</dbReference>
<dbReference type="PROSITE" id="PS01150">
    <property type="entry name" value="COMPLEX1_20K"/>
    <property type="match status" value="1"/>
</dbReference>
<protein>
    <recommendedName>
        <fullName evidence="1">NADH-quinone oxidoreductase subunit B</fullName>
        <ecNumber evidence="1">7.1.1.-</ecNumber>
    </recommendedName>
    <alternativeName>
        <fullName evidence="1">NADH dehydrogenase I subunit B</fullName>
    </alternativeName>
    <alternativeName>
        <fullName evidence="1">NDH-1 subunit B</fullName>
    </alternativeName>
</protein>
<name>NUOB_ANAD2</name>
<gene>
    <name evidence="1" type="primary">nuoB</name>
    <name type="ordered locus">A2cp1_1380</name>
</gene>
<accession>B8JH22</accession>
<evidence type="ECO:0000255" key="1">
    <source>
        <dbReference type="HAMAP-Rule" id="MF_01356"/>
    </source>
</evidence>
<sequence>MASELDGLPVIATRREEAEGFLQGLVSKSLGWARKYSLFTYPFVTACCGMEYMTMASARYDSDRFGAAMPRFSPRQADLLMVVGTVNCKQAPILQRVYEQMADPKWVMAFGVCASSGGFYDNYATVQGIDRVIPVDVYVPGCPPRPEQVLDGIMLLQKKIQNQSHKLIDRTPLPVISGGAGR</sequence>
<proteinExistence type="inferred from homology"/>
<keyword id="KW-0004">4Fe-4S</keyword>
<keyword id="KW-0997">Cell inner membrane</keyword>
<keyword id="KW-1003">Cell membrane</keyword>
<keyword id="KW-0408">Iron</keyword>
<keyword id="KW-0411">Iron-sulfur</keyword>
<keyword id="KW-0472">Membrane</keyword>
<keyword id="KW-0479">Metal-binding</keyword>
<keyword id="KW-0520">NAD</keyword>
<keyword id="KW-0874">Quinone</keyword>
<keyword id="KW-1278">Translocase</keyword>
<keyword id="KW-0813">Transport</keyword>
<keyword id="KW-0830">Ubiquinone</keyword>
<reference key="1">
    <citation type="submission" date="2009-01" db="EMBL/GenBank/DDBJ databases">
        <title>Complete sequence of Anaeromyxobacter dehalogenans 2CP-1.</title>
        <authorList>
            <person name="Lucas S."/>
            <person name="Copeland A."/>
            <person name="Lapidus A."/>
            <person name="Glavina del Rio T."/>
            <person name="Dalin E."/>
            <person name="Tice H."/>
            <person name="Bruce D."/>
            <person name="Goodwin L."/>
            <person name="Pitluck S."/>
            <person name="Saunders E."/>
            <person name="Brettin T."/>
            <person name="Detter J.C."/>
            <person name="Han C."/>
            <person name="Larimer F."/>
            <person name="Land M."/>
            <person name="Hauser L."/>
            <person name="Kyrpides N."/>
            <person name="Ovchinnikova G."/>
            <person name="Beliaev A.S."/>
            <person name="Richardson P."/>
        </authorList>
    </citation>
    <scope>NUCLEOTIDE SEQUENCE [LARGE SCALE GENOMIC DNA]</scope>
    <source>
        <strain>2CP-1 / ATCC BAA-258</strain>
    </source>
</reference>